<feature type="chain" id="PRO_0000178433" description="Large ribosomal subunit protein bL28">
    <location>
        <begin position="1"/>
        <end position="97"/>
    </location>
</feature>
<evidence type="ECO:0000255" key="1">
    <source>
        <dbReference type="HAMAP-Rule" id="MF_00373"/>
    </source>
</evidence>
<evidence type="ECO:0000305" key="2"/>
<name>RL28_BARHE</name>
<sequence>MSRACELTGKTVQYGNNVSHANNKTRRRFLPNLCNVTLISEVLQQSYRLRVSASALRSVEHRGGLDGFLVKADDKELSQRARLLKRQIVKKKAEKAA</sequence>
<dbReference type="EMBL" id="BX897699">
    <property type="protein sequence ID" value="CAF28355.1"/>
    <property type="molecule type" value="Genomic_DNA"/>
</dbReference>
<dbReference type="RefSeq" id="WP_011181357.1">
    <property type="nucleotide sequence ID" value="NZ_LRIJ02000001.1"/>
</dbReference>
<dbReference type="SMR" id="Q6G5T1"/>
<dbReference type="PaxDb" id="283166-BH15920"/>
<dbReference type="EnsemblBacteria" id="CAF28355">
    <property type="protein sequence ID" value="CAF28355"/>
    <property type="gene ID" value="BH15920"/>
</dbReference>
<dbReference type="GeneID" id="92986213"/>
<dbReference type="KEGG" id="bhe:BH15920"/>
<dbReference type="eggNOG" id="COG0227">
    <property type="taxonomic scope" value="Bacteria"/>
</dbReference>
<dbReference type="OrthoDB" id="9805609at2"/>
<dbReference type="Proteomes" id="UP000000421">
    <property type="component" value="Chromosome"/>
</dbReference>
<dbReference type="GO" id="GO:0022625">
    <property type="term" value="C:cytosolic large ribosomal subunit"/>
    <property type="evidence" value="ECO:0007669"/>
    <property type="project" value="TreeGrafter"/>
</dbReference>
<dbReference type="GO" id="GO:0003735">
    <property type="term" value="F:structural constituent of ribosome"/>
    <property type="evidence" value="ECO:0007669"/>
    <property type="project" value="InterPro"/>
</dbReference>
<dbReference type="GO" id="GO:0006412">
    <property type="term" value="P:translation"/>
    <property type="evidence" value="ECO:0007669"/>
    <property type="project" value="UniProtKB-UniRule"/>
</dbReference>
<dbReference type="Gene3D" id="2.30.170.40">
    <property type="entry name" value="Ribosomal protein L28/L24"/>
    <property type="match status" value="1"/>
</dbReference>
<dbReference type="HAMAP" id="MF_00373">
    <property type="entry name" value="Ribosomal_bL28"/>
    <property type="match status" value="1"/>
</dbReference>
<dbReference type="InterPro" id="IPR026569">
    <property type="entry name" value="Ribosomal_bL28"/>
</dbReference>
<dbReference type="InterPro" id="IPR034704">
    <property type="entry name" value="Ribosomal_bL28/bL31-like_sf"/>
</dbReference>
<dbReference type="InterPro" id="IPR001383">
    <property type="entry name" value="Ribosomal_bL28_bact-type"/>
</dbReference>
<dbReference type="InterPro" id="IPR037147">
    <property type="entry name" value="Ribosomal_bL28_sf"/>
</dbReference>
<dbReference type="NCBIfam" id="TIGR00009">
    <property type="entry name" value="L28"/>
    <property type="match status" value="1"/>
</dbReference>
<dbReference type="PANTHER" id="PTHR13528">
    <property type="entry name" value="39S RIBOSOMAL PROTEIN L28, MITOCHONDRIAL"/>
    <property type="match status" value="1"/>
</dbReference>
<dbReference type="PANTHER" id="PTHR13528:SF2">
    <property type="entry name" value="LARGE RIBOSOMAL SUBUNIT PROTEIN BL28M"/>
    <property type="match status" value="1"/>
</dbReference>
<dbReference type="Pfam" id="PF00830">
    <property type="entry name" value="Ribosomal_L28"/>
    <property type="match status" value="1"/>
</dbReference>
<dbReference type="SUPFAM" id="SSF143800">
    <property type="entry name" value="L28p-like"/>
    <property type="match status" value="1"/>
</dbReference>
<organism>
    <name type="scientific">Bartonella henselae (strain ATCC 49882 / DSM 28221 / CCUG 30454 / Houston 1)</name>
    <name type="common">Rochalimaea henselae</name>
    <dbReference type="NCBI Taxonomy" id="283166"/>
    <lineage>
        <taxon>Bacteria</taxon>
        <taxon>Pseudomonadati</taxon>
        <taxon>Pseudomonadota</taxon>
        <taxon>Alphaproteobacteria</taxon>
        <taxon>Hyphomicrobiales</taxon>
        <taxon>Bartonellaceae</taxon>
        <taxon>Bartonella</taxon>
    </lineage>
</organism>
<comment type="similarity">
    <text evidence="1">Belongs to the bacterial ribosomal protein bL28 family.</text>
</comment>
<protein>
    <recommendedName>
        <fullName evidence="1">Large ribosomal subunit protein bL28</fullName>
    </recommendedName>
    <alternativeName>
        <fullName evidence="2">50S ribosomal protein L28</fullName>
    </alternativeName>
</protein>
<reference key="1">
    <citation type="journal article" date="2004" name="Proc. Natl. Acad. Sci. U.S.A.">
        <title>The louse-borne human pathogen Bartonella quintana is a genomic derivative of the zoonotic agent Bartonella henselae.</title>
        <authorList>
            <person name="Alsmark U.C.M."/>
            <person name="Frank A.C."/>
            <person name="Karlberg E.O."/>
            <person name="Legault B.-A."/>
            <person name="Ardell D.H."/>
            <person name="Canbaeck B."/>
            <person name="Eriksson A.-S."/>
            <person name="Naeslund A.K."/>
            <person name="Handley S.A."/>
            <person name="Huvet M."/>
            <person name="La Scola B."/>
            <person name="Holmberg M."/>
            <person name="Andersson S.G.E."/>
        </authorList>
    </citation>
    <scope>NUCLEOTIDE SEQUENCE [LARGE SCALE GENOMIC DNA]</scope>
    <source>
        <strain>ATCC 49882 / DSM 28221 / CCUG 30454 / Houston 1</strain>
    </source>
</reference>
<accession>Q6G5T1</accession>
<proteinExistence type="inferred from homology"/>
<keyword id="KW-0687">Ribonucleoprotein</keyword>
<keyword id="KW-0689">Ribosomal protein</keyword>
<gene>
    <name evidence="1" type="primary">rpmB</name>
    <name type="ordered locus">BH15920</name>
</gene>